<evidence type="ECO:0000255" key="1">
    <source>
        <dbReference type="HAMAP-Rule" id="MF_00388"/>
    </source>
</evidence>
<evidence type="ECO:0000305" key="2"/>
<feature type="chain" id="PRO_0000253677" description="UDP-3-O-acyl-N-acetylglucosamine deacetylase">
    <location>
        <begin position="1"/>
        <end position="309"/>
    </location>
</feature>
<feature type="active site" description="Proton donor" evidence="1">
    <location>
        <position position="264"/>
    </location>
</feature>
<feature type="binding site" evidence="1">
    <location>
        <position position="78"/>
    </location>
    <ligand>
        <name>Zn(2+)</name>
        <dbReference type="ChEBI" id="CHEBI:29105"/>
    </ligand>
</feature>
<feature type="binding site" evidence="1">
    <location>
        <position position="237"/>
    </location>
    <ligand>
        <name>Zn(2+)</name>
        <dbReference type="ChEBI" id="CHEBI:29105"/>
    </ligand>
</feature>
<feature type="binding site" evidence="1">
    <location>
        <position position="241"/>
    </location>
    <ligand>
        <name>Zn(2+)</name>
        <dbReference type="ChEBI" id="CHEBI:29105"/>
    </ligand>
</feature>
<keyword id="KW-0378">Hydrolase</keyword>
<keyword id="KW-0441">Lipid A biosynthesis</keyword>
<keyword id="KW-0444">Lipid biosynthesis</keyword>
<keyword id="KW-0443">Lipid metabolism</keyword>
<keyword id="KW-0479">Metal-binding</keyword>
<keyword id="KW-1185">Reference proteome</keyword>
<keyword id="KW-0862">Zinc</keyword>
<proteinExistence type="inferred from homology"/>
<accession>Q1GZ08</accession>
<name>LPXC_METFK</name>
<sequence>MLKQRTLKKEISATGVGLHSGDKVTLTLRPAAPDTGIVFRRIDLPDTAEFKVQPHLVTDTKLCSALECNGARVATIEHLMSALAGLGIDNIRIELNAGEVPIMDGSAGPFVFLLQQAGIVEQDAMKKFIRIKKTVEYREGDKWVRFDPYFGFKLDFTIDFNHPAVEHTGQRITIDFADNSYIKEISRARTFGFMHEVEALRSMGLARGGSLDNAIVLDEFRVLNSDGLRYDDEFVKHKMLDAIGDLYVLGHPLIGAFSAYKAGHYMNNQLLRALLADGDAWEYATFAKIEEAPGAFRNPIGLPPALQYV</sequence>
<dbReference type="EC" id="3.5.1.108" evidence="1"/>
<dbReference type="EMBL" id="CP000284">
    <property type="protein sequence ID" value="ABE50529.1"/>
    <property type="status" value="ALT_INIT"/>
    <property type="molecule type" value="Genomic_DNA"/>
</dbReference>
<dbReference type="RefSeq" id="WP_048811716.1">
    <property type="nucleotide sequence ID" value="NC_007947.1"/>
</dbReference>
<dbReference type="SMR" id="Q1GZ08"/>
<dbReference type="STRING" id="265072.Mfla_2262"/>
<dbReference type="KEGG" id="mfa:Mfla_2262"/>
<dbReference type="eggNOG" id="COG0774">
    <property type="taxonomic scope" value="Bacteria"/>
</dbReference>
<dbReference type="HOGENOM" id="CLU_046528_1_0_4"/>
<dbReference type="OrthoDB" id="9802746at2"/>
<dbReference type="UniPathway" id="UPA00359">
    <property type="reaction ID" value="UER00478"/>
</dbReference>
<dbReference type="Proteomes" id="UP000002440">
    <property type="component" value="Chromosome"/>
</dbReference>
<dbReference type="GO" id="GO:0016020">
    <property type="term" value="C:membrane"/>
    <property type="evidence" value="ECO:0007669"/>
    <property type="project" value="GOC"/>
</dbReference>
<dbReference type="GO" id="GO:0046872">
    <property type="term" value="F:metal ion binding"/>
    <property type="evidence" value="ECO:0007669"/>
    <property type="project" value="UniProtKB-KW"/>
</dbReference>
<dbReference type="GO" id="GO:0103117">
    <property type="term" value="F:UDP-3-O-acyl-N-acetylglucosamine deacetylase activity"/>
    <property type="evidence" value="ECO:0007669"/>
    <property type="project" value="UniProtKB-UniRule"/>
</dbReference>
<dbReference type="GO" id="GO:0009245">
    <property type="term" value="P:lipid A biosynthetic process"/>
    <property type="evidence" value="ECO:0007669"/>
    <property type="project" value="UniProtKB-UniRule"/>
</dbReference>
<dbReference type="Gene3D" id="3.30.230.20">
    <property type="entry name" value="lpxc deacetylase, domain 1"/>
    <property type="match status" value="1"/>
</dbReference>
<dbReference type="Gene3D" id="3.30.1700.10">
    <property type="entry name" value="lpxc deacetylase, domain 2"/>
    <property type="match status" value="1"/>
</dbReference>
<dbReference type="HAMAP" id="MF_00388">
    <property type="entry name" value="LpxC"/>
    <property type="match status" value="1"/>
</dbReference>
<dbReference type="InterPro" id="IPR020568">
    <property type="entry name" value="Ribosomal_Su5_D2-typ_SF"/>
</dbReference>
<dbReference type="InterPro" id="IPR004463">
    <property type="entry name" value="UDP-acyl_GlcNac_deAcase"/>
</dbReference>
<dbReference type="InterPro" id="IPR011334">
    <property type="entry name" value="UDP-acyl_GlcNac_deAcase_C"/>
</dbReference>
<dbReference type="InterPro" id="IPR015870">
    <property type="entry name" value="UDP-acyl_N-AcGlcN_deAcase_N"/>
</dbReference>
<dbReference type="NCBIfam" id="TIGR00325">
    <property type="entry name" value="lpxC"/>
    <property type="match status" value="1"/>
</dbReference>
<dbReference type="PANTHER" id="PTHR33694">
    <property type="entry name" value="UDP-3-O-ACYL-N-ACETYLGLUCOSAMINE DEACETYLASE 1, MITOCHONDRIAL-RELATED"/>
    <property type="match status" value="1"/>
</dbReference>
<dbReference type="PANTHER" id="PTHR33694:SF1">
    <property type="entry name" value="UDP-3-O-ACYL-N-ACETYLGLUCOSAMINE DEACETYLASE 1, MITOCHONDRIAL-RELATED"/>
    <property type="match status" value="1"/>
</dbReference>
<dbReference type="Pfam" id="PF03331">
    <property type="entry name" value="LpxC"/>
    <property type="match status" value="1"/>
</dbReference>
<dbReference type="SUPFAM" id="SSF54211">
    <property type="entry name" value="Ribosomal protein S5 domain 2-like"/>
    <property type="match status" value="2"/>
</dbReference>
<comment type="function">
    <text evidence="1">Catalyzes the hydrolysis of UDP-3-O-myristoyl-N-acetylglucosamine to form UDP-3-O-myristoylglucosamine and acetate, the committed step in lipid A biosynthesis.</text>
</comment>
<comment type="catalytic activity">
    <reaction evidence="1">
        <text>a UDP-3-O-[(3R)-3-hydroxyacyl]-N-acetyl-alpha-D-glucosamine + H2O = a UDP-3-O-[(3R)-3-hydroxyacyl]-alpha-D-glucosamine + acetate</text>
        <dbReference type="Rhea" id="RHEA:67816"/>
        <dbReference type="ChEBI" id="CHEBI:15377"/>
        <dbReference type="ChEBI" id="CHEBI:30089"/>
        <dbReference type="ChEBI" id="CHEBI:137740"/>
        <dbReference type="ChEBI" id="CHEBI:173225"/>
        <dbReference type="EC" id="3.5.1.108"/>
    </reaction>
</comment>
<comment type="cofactor">
    <cofactor evidence="1">
        <name>Zn(2+)</name>
        <dbReference type="ChEBI" id="CHEBI:29105"/>
    </cofactor>
</comment>
<comment type="pathway">
    <text evidence="1">Glycolipid biosynthesis; lipid IV(A) biosynthesis; lipid IV(A) from (3R)-3-hydroxytetradecanoyl-[acyl-carrier-protein] and UDP-N-acetyl-alpha-D-glucosamine: step 2/6.</text>
</comment>
<comment type="similarity">
    <text evidence="1">Belongs to the LpxC family.</text>
</comment>
<comment type="sequence caution" evidence="2">
    <conflict type="erroneous initiation">
        <sequence resource="EMBL-CDS" id="ABE50529"/>
    </conflict>
</comment>
<protein>
    <recommendedName>
        <fullName evidence="1">UDP-3-O-acyl-N-acetylglucosamine deacetylase</fullName>
        <shortName evidence="1">UDP-3-O-acyl-GlcNAc deacetylase</shortName>
        <ecNumber evidence="1">3.5.1.108</ecNumber>
    </recommendedName>
    <alternativeName>
        <fullName evidence="1">UDP-3-O-[R-3-hydroxymyristoyl]-N-acetylglucosamine deacetylase</fullName>
    </alternativeName>
</protein>
<reference key="1">
    <citation type="submission" date="2006-03" db="EMBL/GenBank/DDBJ databases">
        <title>Complete sequence of Methylobacillus flagellatus KT.</title>
        <authorList>
            <consortium name="US DOE Joint Genome Institute"/>
            <person name="Copeland A."/>
            <person name="Lucas S."/>
            <person name="Lapidus A."/>
            <person name="Barry K."/>
            <person name="Detter J.C."/>
            <person name="Glavina del Rio T."/>
            <person name="Hammon N."/>
            <person name="Israni S."/>
            <person name="Dalin E."/>
            <person name="Tice H."/>
            <person name="Pitluck S."/>
            <person name="Brettin T."/>
            <person name="Bruce D."/>
            <person name="Han C."/>
            <person name="Tapia R."/>
            <person name="Saunders E."/>
            <person name="Gilna P."/>
            <person name="Schmutz J."/>
            <person name="Larimer F."/>
            <person name="Land M."/>
            <person name="Kyrpides N."/>
            <person name="Anderson I."/>
            <person name="Richardson P."/>
        </authorList>
    </citation>
    <scope>NUCLEOTIDE SEQUENCE [LARGE SCALE GENOMIC DNA]</scope>
    <source>
        <strain>ATCC 51484 / DSM 6875 / VKM B-1610 / KT</strain>
    </source>
</reference>
<gene>
    <name evidence="1" type="primary">lpxC</name>
    <name type="ordered locus">Mfla_2262</name>
</gene>
<organism>
    <name type="scientific">Methylobacillus flagellatus (strain ATCC 51484 / DSM 6875 / VKM B-1610 / KT)</name>
    <dbReference type="NCBI Taxonomy" id="265072"/>
    <lineage>
        <taxon>Bacteria</taxon>
        <taxon>Pseudomonadati</taxon>
        <taxon>Pseudomonadota</taxon>
        <taxon>Betaproteobacteria</taxon>
        <taxon>Nitrosomonadales</taxon>
        <taxon>Methylophilaceae</taxon>
        <taxon>Methylobacillus</taxon>
    </lineage>
</organism>